<keyword id="KW-1015">Disulfide bond</keyword>
<keyword id="KW-0325">Glycoprotein</keyword>
<keyword id="KW-0372">Hormone</keyword>
<keyword id="KW-0964">Secreted</keyword>
<keyword id="KW-0732">Signal</keyword>
<protein>
    <recommendedName>
        <fullName>Gonadotropin subunit beta-1</fullName>
    </recommendedName>
    <alternativeName>
        <fullName>GTH beta-1</fullName>
    </alternativeName>
    <alternativeName>
        <fullName>GTH-I-beta</fullName>
    </alternativeName>
    <alternativeName>
        <fullName>Gonadotropin beta-I chain</fullName>
    </alternativeName>
</protein>
<sequence length="132" mass="14560">MMRGVTMVLLLPMLVWAGSECKARCCLTNISITVESDECGSCITVNTTACTGLCRTQERAYRSPVAPYFQNTCNFRDWTYETIQLPGCPLGVDSSFTYPVALSCECSQCNTEITDCGAFSMQPSSCHTHAYY</sequence>
<gene>
    <name type="primary">cgba</name>
</gene>
<comment type="function">
    <text>Involved in gametogenesis and steroidogenesis.</text>
</comment>
<comment type="subunit">
    <text>Heterodimer of an alpha and a beta chain.</text>
</comment>
<comment type="subcellular location">
    <subcellularLocation>
        <location>Secreted</location>
    </subcellularLocation>
</comment>
<comment type="similarity">
    <text evidence="3">Belongs to the glycoprotein hormones subunit beta family.</text>
</comment>
<proteinExistence type="evidence at transcript level"/>
<name>GTHB1_ICTPU</name>
<reference key="1">
    <citation type="submission" date="1998-12" db="EMBL/GenBank/DDBJ databases">
        <title>Channel catfish gonadotropin beta-subunits: cDNA cloning and their expression during ovulation.</title>
        <authorList>
            <person name="Liu Z.J."/>
            <person name="Kim S."/>
            <person name="Karsi A."/>
            <person name="Dunham R."/>
        </authorList>
    </citation>
    <scope>NUCLEOTIDE SEQUENCE [MRNA]</scope>
    <source>
        <strain>Kansas</strain>
    </source>
</reference>
<evidence type="ECO:0000250" key="1"/>
<evidence type="ECO:0000255" key="2"/>
<evidence type="ECO:0000305" key="3"/>
<dbReference type="EMBL" id="AF112191">
    <property type="protein sequence ID" value="AAG32155.1"/>
    <property type="molecule type" value="mRNA"/>
</dbReference>
<dbReference type="RefSeq" id="NP_001187008.1">
    <property type="nucleotide sequence ID" value="NM_001200079.1"/>
</dbReference>
<dbReference type="SMR" id="Q9DG81"/>
<dbReference type="STRING" id="7998.ENSIPUP00000027043"/>
<dbReference type="GlyCosmos" id="Q9DG81">
    <property type="glycosylation" value="2 sites, No reported glycans"/>
</dbReference>
<dbReference type="GeneID" id="100304480"/>
<dbReference type="KEGG" id="ipu:100304480"/>
<dbReference type="CTD" id="2488"/>
<dbReference type="OrthoDB" id="8903627at2759"/>
<dbReference type="Proteomes" id="UP000221080">
    <property type="component" value="Chromosome 27"/>
</dbReference>
<dbReference type="GO" id="GO:0005737">
    <property type="term" value="C:cytoplasm"/>
    <property type="evidence" value="ECO:0007669"/>
    <property type="project" value="TreeGrafter"/>
</dbReference>
<dbReference type="GO" id="GO:0005615">
    <property type="term" value="C:extracellular space"/>
    <property type="evidence" value="ECO:0007669"/>
    <property type="project" value="TreeGrafter"/>
</dbReference>
<dbReference type="GO" id="GO:0016913">
    <property type="term" value="F:follicle-stimulating hormone activity"/>
    <property type="evidence" value="ECO:0000314"/>
    <property type="project" value="AgBase"/>
</dbReference>
<dbReference type="GO" id="GO:0031762">
    <property type="term" value="F:follicle-stimulating hormone receptor binding"/>
    <property type="evidence" value="ECO:0000314"/>
    <property type="project" value="AgBase"/>
</dbReference>
<dbReference type="GO" id="GO:0007186">
    <property type="term" value="P:G protein-coupled receptor signaling pathway"/>
    <property type="evidence" value="ECO:0007669"/>
    <property type="project" value="TreeGrafter"/>
</dbReference>
<dbReference type="GO" id="GO:0030728">
    <property type="term" value="P:ovulation"/>
    <property type="evidence" value="ECO:0007669"/>
    <property type="project" value="TreeGrafter"/>
</dbReference>
<dbReference type="GO" id="GO:2000836">
    <property type="term" value="P:positive regulation of androgen secretion"/>
    <property type="evidence" value="ECO:0000315"/>
    <property type="project" value="AgBase"/>
</dbReference>
<dbReference type="GO" id="GO:2000866">
    <property type="term" value="P:positive regulation of estradiol secretion"/>
    <property type="evidence" value="ECO:0000314"/>
    <property type="project" value="AgBase"/>
</dbReference>
<dbReference type="GO" id="GO:0010628">
    <property type="term" value="P:positive regulation of gene expression"/>
    <property type="evidence" value="ECO:0000314"/>
    <property type="project" value="AgBase"/>
</dbReference>
<dbReference type="CDD" id="cd00069">
    <property type="entry name" value="GHB_like"/>
    <property type="match status" value="1"/>
</dbReference>
<dbReference type="FunFam" id="2.10.90.10:FF:000007">
    <property type="entry name" value="Luteinizing hormone beta subunit"/>
    <property type="match status" value="1"/>
</dbReference>
<dbReference type="Gene3D" id="2.10.90.10">
    <property type="entry name" value="Cystine-knot cytokines"/>
    <property type="match status" value="1"/>
</dbReference>
<dbReference type="InterPro" id="IPR029034">
    <property type="entry name" value="Cystine-knot_cytokine"/>
</dbReference>
<dbReference type="InterPro" id="IPR006208">
    <property type="entry name" value="Glyco_hormone_CN"/>
</dbReference>
<dbReference type="InterPro" id="IPR001545">
    <property type="entry name" value="Gonadotropin_bsu"/>
</dbReference>
<dbReference type="InterPro" id="IPR018245">
    <property type="entry name" value="Gonadotropin_bsu_CS"/>
</dbReference>
<dbReference type="PANTHER" id="PTHR11515">
    <property type="entry name" value="GLYCOPROTEIN HORMONE BETA CHAIN"/>
    <property type="match status" value="1"/>
</dbReference>
<dbReference type="PANTHER" id="PTHR11515:SF11">
    <property type="entry name" value="LUTROPIN SUBUNIT BETA"/>
    <property type="match status" value="1"/>
</dbReference>
<dbReference type="Pfam" id="PF00007">
    <property type="entry name" value="Cys_knot"/>
    <property type="match status" value="1"/>
</dbReference>
<dbReference type="SMART" id="SM00068">
    <property type="entry name" value="GHB"/>
    <property type="match status" value="1"/>
</dbReference>
<dbReference type="SUPFAM" id="SSF57501">
    <property type="entry name" value="Cystine-knot cytokines"/>
    <property type="match status" value="1"/>
</dbReference>
<dbReference type="PROSITE" id="PS00261">
    <property type="entry name" value="GLYCO_HORMONE_BETA_1"/>
    <property type="match status" value="1"/>
</dbReference>
<dbReference type="PROSITE" id="PS00689">
    <property type="entry name" value="GLYCO_HORMONE_BETA_2"/>
    <property type="match status" value="1"/>
</dbReference>
<organism>
    <name type="scientific">Ictalurus punctatus</name>
    <name type="common">Channel catfish</name>
    <name type="synonym">Silurus punctatus</name>
    <dbReference type="NCBI Taxonomy" id="7998"/>
    <lineage>
        <taxon>Eukaryota</taxon>
        <taxon>Metazoa</taxon>
        <taxon>Chordata</taxon>
        <taxon>Craniata</taxon>
        <taxon>Vertebrata</taxon>
        <taxon>Euteleostomi</taxon>
        <taxon>Actinopterygii</taxon>
        <taxon>Neopterygii</taxon>
        <taxon>Teleostei</taxon>
        <taxon>Ostariophysi</taxon>
        <taxon>Siluriformes</taxon>
        <taxon>Ictaluridae</taxon>
        <taxon>Ictalurus</taxon>
    </lineage>
</organism>
<feature type="signal peptide" evidence="2">
    <location>
        <begin position="1"/>
        <end position="17"/>
    </location>
</feature>
<feature type="chain" id="PRO_0000011695" description="Gonadotropin subunit beta-1">
    <location>
        <begin position="18"/>
        <end position="132"/>
    </location>
</feature>
<feature type="glycosylation site" description="N-linked (GlcNAc...) asparagine" evidence="2">
    <location>
        <position position="29"/>
    </location>
</feature>
<feature type="glycosylation site" description="N-linked (GlcNAc...) asparagine" evidence="2">
    <location>
        <position position="46"/>
    </location>
</feature>
<feature type="disulfide bond" evidence="1">
    <location>
        <begin position="25"/>
        <end position="73"/>
    </location>
</feature>
<feature type="disulfide bond" evidence="1">
    <location>
        <begin position="39"/>
        <end position="88"/>
    </location>
</feature>
<feature type="disulfide bond" evidence="1">
    <location>
        <begin position="50"/>
        <end position="104"/>
    </location>
</feature>
<feature type="disulfide bond" evidence="1">
    <location>
        <begin position="54"/>
        <end position="106"/>
    </location>
</feature>
<feature type="disulfide bond" evidence="1">
    <location>
        <begin position="109"/>
        <end position="116"/>
    </location>
</feature>
<accession>Q9DG81</accession>